<accession>B1AVD1</accession>
<accession>Q3TA51</accession>
<accession>Q3TPA9</accession>
<accession>Q8BVD6</accession>
<accession>Q91Y31</accession>
<accession>Q91ZH9</accession>
<proteinExistence type="evidence at protein level"/>
<sequence length="674" mass="76434">MAQAYWQCYPWLVLLCACAWSYPEPKYLGREDVRNCSTSPERLPVTAVNTTMRLAALRQQMETWNLSAYIIPDTDAHMSEYIGKPDKRREWISGFTGSAGTAVVTMGKAAVWTDSRYWTQAERQMDCNWELHKEVSISSIVAWILAEVPDGQNVGFDPFLFSVDSWKNYDQGFQDSSRHLLSVTTNLVDVAWGSERPPVPSQPIYALPKEFTGSTWQEKVSAVRSYMEHHAKTPTGVLLSALDETAWLFNLRSSDIPYNPFFYSYALLTNSSIRLFVNKSRFSLETLQYLNTNCTLPMCVQLEDYSQVRDSVKAYASGDVKILIGVSYTTYGVYEVIPKEKLVTDTYSPVMLIKAVKNSKEQALLKSSHVRDAVAVIQYLVWLEKNVPKGTVDEFSGAEYIDELRRNENFSSGPSFETISASGLNAALAHYSPTKELHRKLSSDEMYLVDSGGQYWDGTTDITRTVHWGTPTAFQKEAYTRVLMGNIDLSRLVFPAATSGRVIEAFARRALWEVGLNYGHGTGHGIGNFLCVHEWPVGFQYNNIAMAKGMFTSIEPGYYHDGEFGIRLEDVALVVEAKTKYPGDYLTFELVSFVPYDRNLIDVRLLSPEQLQYLNRYYQTIRENVGPELQRRQLLEEFAWLEQHTEPLSARAPHIISWTSLWVASALAILSWSS</sequence>
<keyword id="KW-0031">Aminopeptidase</keyword>
<keyword id="KW-1003">Cell membrane</keyword>
<keyword id="KW-0325">Glycoprotein</keyword>
<keyword id="KW-0336">GPI-anchor</keyword>
<keyword id="KW-0378">Hydrolase</keyword>
<keyword id="KW-0449">Lipoprotein</keyword>
<keyword id="KW-0472">Membrane</keyword>
<keyword id="KW-0479">Metal-binding</keyword>
<keyword id="KW-0645">Protease</keyword>
<keyword id="KW-1185">Reference proteome</keyword>
<keyword id="KW-0732">Signal</keyword>
<keyword id="KW-0862">Zinc</keyword>
<feature type="signal peptide" evidence="3">
    <location>
        <begin position="1"/>
        <end position="22"/>
    </location>
</feature>
<feature type="chain" id="PRO_5008409937" description="Xaa-Pro aminopeptidase 2" evidence="8">
    <location>
        <begin position="23"/>
        <end position="650"/>
    </location>
</feature>
<feature type="propeptide" id="PRO_0000438729" description="Removed in mature form" evidence="8">
    <location>
        <begin position="651"/>
        <end position="674"/>
    </location>
</feature>
<feature type="binding site" evidence="1">
    <location>
        <position position="116"/>
    </location>
    <ligand>
        <name>substrate</name>
    </ligand>
</feature>
<feature type="binding site" evidence="1">
    <location>
        <position position="430"/>
    </location>
    <ligand>
        <name>substrate</name>
    </ligand>
</feature>
<feature type="binding site" evidence="1">
    <location>
        <position position="450"/>
    </location>
    <ligand>
        <name>Zn(2+)</name>
        <dbReference type="ChEBI" id="CHEBI:29105"/>
        <label>1</label>
    </ligand>
</feature>
<feature type="binding site" evidence="1">
    <location>
        <position position="461"/>
    </location>
    <ligand>
        <name>Zn(2+)</name>
        <dbReference type="ChEBI" id="CHEBI:29105"/>
        <label>1</label>
    </ligand>
</feature>
<feature type="binding site" evidence="1">
    <location>
        <position position="461"/>
    </location>
    <ligand>
        <name>Zn(2+)</name>
        <dbReference type="ChEBI" id="CHEBI:29105"/>
        <label>2</label>
    </ligand>
</feature>
<feature type="binding site" evidence="1">
    <location>
        <position position="524"/>
    </location>
    <ligand>
        <name>substrate</name>
    </ligand>
</feature>
<feature type="binding site" evidence="1">
    <location>
        <position position="524"/>
    </location>
    <ligand>
        <name>Zn(2+)</name>
        <dbReference type="ChEBI" id="CHEBI:29105"/>
        <label>2</label>
    </ligand>
</feature>
<feature type="binding site" evidence="1">
    <location>
        <position position="533"/>
    </location>
    <ligand>
        <name>substrate</name>
    </ligand>
</feature>
<feature type="binding site" evidence="1">
    <location>
        <position position="555"/>
    </location>
    <ligand>
        <name>substrate</name>
    </ligand>
</feature>
<feature type="binding site" evidence="1">
    <location>
        <position position="555"/>
    </location>
    <ligand>
        <name>Zn(2+)</name>
        <dbReference type="ChEBI" id="CHEBI:29105"/>
        <label>2</label>
    </ligand>
</feature>
<feature type="binding site" evidence="1">
    <location>
        <position position="569"/>
    </location>
    <ligand>
        <name>Zn(2+)</name>
        <dbReference type="ChEBI" id="CHEBI:29105"/>
        <label>1</label>
    </ligand>
</feature>
<feature type="binding site" evidence="1">
    <location>
        <position position="569"/>
    </location>
    <ligand>
        <name>Zn(2+)</name>
        <dbReference type="ChEBI" id="CHEBI:29105"/>
        <label>2</label>
    </ligand>
</feature>
<feature type="lipid moiety-binding region" description="GPI-anchor amidated alanine" evidence="2">
    <location>
        <position position="650"/>
    </location>
</feature>
<feature type="glycosylation site" description="N-linked (GlcNAc...) asparagine" evidence="4">
    <location>
        <position position="65"/>
    </location>
</feature>
<feature type="glycosylation site" description="N-linked (GlcNAc...) asparagine" evidence="4">
    <location>
        <position position="270"/>
    </location>
</feature>
<feature type="glycosylation site" description="N-linked (GlcNAc...) asparagine" evidence="4">
    <location>
        <position position="278"/>
    </location>
</feature>
<feature type="glycosylation site" description="N-linked (GlcNAc...) asparagine" evidence="4">
    <location>
        <position position="293"/>
    </location>
</feature>
<feature type="sequence conflict" description="In Ref. 1; AAI40978, 3; BAE42819 and 6; AAK52065." evidence="8" ref="1 3 6">
    <original>V</original>
    <variation>I</variation>
    <location>
        <position position="13"/>
    </location>
</feature>
<feature type="sequence conflict" description="In Ref. 2; AAL26562." evidence="8" ref="2">
    <original>W</original>
    <variation>C</variation>
    <location>
        <position position="64"/>
    </location>
</feature>
<feature type="sequence conflict" description="In Ref. 3; BAE42819." evidence="8" ref="3">
    <original>L</original>
    <variation>I</variation>
    <location>
        <position position="323"/>
    </location>
</feature>
<dbReference type="EC" id="3.4.11.9" evidence="2"/>
<dbReference type="EMBL" id="AF367247">
    <property type="protein sequence ID" value="AAK52065.1"/>
    <property type="molecule type" value="mRNA"/>
</dbReference>
<dbReference type="EMBL" id="AF428102">
    <property type="protein sequence ID" value="AAL26562.1"/>
    <property type="molecule type" value="mRNA"/>
</dbReference>
<dbReference type="EMBL" id="AK078835">
    <property type="protein sequence ID" value="BAC37415.1"/>
    <property type="status" value="ALT_FRAME"/>
    <property type="molecule type" value="mRNA"/>
</dbReference>
<dbReference type="EMBL" id="AK164538">
    <property type="protein sequence ID" value="BAE37828.1"/>
    <property type="status" value="ALT_FRAME"/>
    <property type="molecule type" value="mRNA"/>
</dbReference>
<dbReference type="EMBL" id="AK172086">
    <property type="protein sequence ID" value="BAE42819.1"/>
    <property type="status" value="ALT_FRAME"/>
    <property type="molecule type" value="mRNA"/>
</dbReference>
<dbReference type="EMBL" id="AL672274">
    <property type="status" value="NOT_ANNOTATED_CDS"/>
    <property type="molecule type" value="Genomic_DNA"/>
</dbReference>
<dbReference type="EMBL" id="CH466570">
    <property type="protein sequence ID" value="EDL29066.1"/>
    <property type="molecule type" value="Genomic_DNA"/>
</dbReference>
<dbReference type="EMBL" id="BC140977">
    <property type="protein sequence ID" value="AAI40978.1"/>
    <property type="molecule type" value="mRNA"/>
</dbReference>
<dbReference type="CCDS" id="CCDS30106.1"/>
<dbReference type="RefSeq" id="NP_001276658.1">
    <property type="nucleotide sequence ID" value="NM_001289729.1"/>
</dbReference>
<dbReference type="RefSeq" id="NP_573476.2">
    <property type="nucleotide sequence ID" value="NM_133213.2"/>
</dbReference>
<dbReference type="RefSeq" id="XP_006541495.1">
    <property type="nucleotide sequence ID" value="XM_006541432.1"/>
</dbReference>
<dbReference type="SMR" id="B1AVD1"/>
<dbReference type="FunCoup" id="B1AVD1">
    <property type="interactions" value="105"/>
</dbReference>
<dbReference type="STRING" id="10090.ENSMUSP00000110652"/>
<dbReference type="MEROPS" id="M24.005"/>
<dbReference type="GlyCosmos" id="B1AVD1">
    <property type="glycosylation" value="4 sites, No reported glycans"/>
</dbReference>
<dbReference type="GlyGen" id="B1AVD1">
    <property type="glycosylation" value="6 sites, 2 N-linked glycans (2 sites)"/>
</dbReference>
<dbReference type="iPTMnet" id="B1AVD1"/>
<dbReference type="PhosphoSitePlus" id="B1AVD1"/>
<dbReference type="jPOST" id="B1AVD1"/>
<dbReference type="PaxDb" id="10090-ENSMUSP00000076951"/>
<dbReference type="PeptideAtlas" id="B1AVD1"/>
<dbReference type="ProteomicsDB" id="300188"/>
<dbReference type="Pumba" id="B1AVD1"/>
<dbReference type="Antibodypedia" id="16116">
    <property type="antibodies" value="176 antibodies from 28 providers"/>
</dbReference>
<dbReference type="DNASU" id="170745"/>
<dbReference type="Ensembl" id="ENSMUST00000077775.11">
    <property type="protein sequence ID" value="ENSMUSP00000076951.5"/>
    <property type="gene ID" value="ENSMUSG00000037005.17"/>
</dbReference>
<dbReference type="GeneID" id="170745"/>
<dbReference type="KEGG" id="mmu:170745"/>
<dbReference type="UCSC" id="uc009tbv.1">
    <property type="organism name" value="mouse"/>
</dbReference>
<dbReference type="AGR" id="MGI:2180001"/>
<dbReference type="CTD" id="7512"/>
<dbReference type="MGI" id="MGI:2180001">
    <property type="gene designation" value="Xpnpep2"/>
</dbReference>
<dbReference type="VEuPathDB" id="HostDB:ENSMUSG00000037005"/>
<dbReference type="eggNOG" id="KOG2413">
    <property type="taxonomic scope" value="Eukaryota"/>
</dbReference>
<dbReference type="GeneTree" id="ENSGT00940000157196"/>
<dbReference type="InParanoid" id="B1AVD1"/>
<dbReference type="OMA" id="LTHFRYT"/>
<dbReference type="OrthoDB" id="9995434at2759"/>
<dbReference type="PhylomeDB" id="B1AVD1"/>
<dbReference type="TreeFam" id="TF314183"/>
<dbReference type="Reactome" id="R-MMU-163125">
    <property type="pathway name" value="Post-translational modification: synthesis of GPI-anchored proteins"/>
</dbReference>
<dbReference type="BioGRID-ORCS" id="170745">
    <property type="hits" value="4 hits in 77 CRISPR screens"/>
</dbReference>
<dbReference type="PRO" id="PR:B1AVD1"/>
<dbReference type="Proteomes" id="UP000000589">
    <property type="component" value="Chromosome X"/>
</dbReference>
<dbReference type="RNAct" id="B1AVD1">
    <property type="molecule type" value="protein"/>
</dbReference>
<dbReference type="Bgee" id="ENSMUSG00000037005">
    <property type="expression patterns" value="Expressed in small intestine Peyer's patch and 62 other cell types or tissues"/>
</dbReference>
<dbReference type="ExpressionAtlas" id="B1AVD1">
    <property type="expression patterns" value="baseline and differential"/>
</dbReference>
<dbReference type="GO" id="GO:0070062">
    <property type="term" value="C:extracellular exosome"/>
    <property type="evidence" value="ECO:0007669"/>
    <property type="project" value="Ensembl"/>
</dbReference>
<dbReference type="GO" id="GO:0005886">
    <property type="term" value="C:plasma membrane"/>
    <property type="evidence" value="ECO:0007669"/>
    <property type="project" value="UniProtKB-SubCell"/>
</dbReference>
<dbReference type="GO" id="GO:0098552">
    <property type="term" value="C:side of membrane"/>
    <property type="evidence" value="ECO:0007669"/>
    <property type="project" value="UniProtKB-KW"/>
</dbReference>
<dbReference type="GO" id="GO:0046872">
    <property type="term" value="F:metal ion binding"/>
    <property type="evidence" value="ECO:0007669"/>
    <property type="project" value="UniProtKB-KW"/>
</dbReference>
<dbReference type="GO" id="GO:0070006">
    <property type="term" value="F:metalloaminopeptidase activity"/>
    <property type="evidence" value="ECO:0007669"/>
    <property type="project" value="InterPro"/>
</dbReference>
<dbReference type="GO" id="GO:0006508">
    <property type="term" value="P:proteolysis"/>
    <property type="evidence" value="ECO:0007669"/>
    <property type="project" value="UniProtKB-KW"/>
</dbReference>
<dbReference type="CDD" id="cd01085">
    <property type="entry name" value="APP"/>
    <property type="match status" value="1"/>
</dbReference>
<dbReference type="FunFam" id="3.40.350.10:FF:000008">
    <property type="entry name" value="xaa-Pro aminopeptidase 2"/>
    <property type="match status" value="1"/>
</dbReference>
<dbReference type="FunFam" id="3.90.230.10:FF:000009">
    <property type="entry name" value="xaa-Pro aminopeptidase 2"/>
    <property type="match status" value="1"/>
</dbReference>
<dbReference type="FunFam" id="3.40.350.10:FF:000003">
    <property type="entry name" value="Xaa-pro aminopeptidase P"/>
    <property type="match status" value="1"/>
</dbReference>
<dbReference type="Gene3D" id="3.90.230.10">
    <property type="entry name" value="Creatinase/methionine aminopeptidase superfamily"/>
    <property type="match status" value="1"/>
</dbReference>
<dbReference type="Gene3D" id="3.40.350.10">
    <property type="entry name" value="Creatinase/prolidase N-terminal domain"/>
    <property type="match status" value="2"/>
</dbReference>
<dbReference type="InterPro" id="IPR029149">
    <property type="entry name" value="Creatin/AminoP/Spt16_N"/>
</dbReference>
<dbReference type="InterPro" id="IPR036005">
    <property type="entry name" value="Creatinase/aminopeptidase-like"/>
</dbReference>
<dbReference type="InterPro" id="IPR000587">
    <property type="entry name" value="Creatinase_N"/>
</dbReference>
<dbReference type="InterPro" id="IPR000994">
    <property type="entry name" value="Pept_M24"/>
</dbReference>
<dbReference type="InterPro" id="IPR033740">
    <property type="entry name" value="Pept_M24B"/>
</dbReference>
<dbReference type="InterPro" id="IPR032416">
    <property type="entry name" value="Peptidase_M24_C"/>
</dbReference>
<dbReference type="InterPro" id="IPR001131">
    <property type="entry name" value="Peptidase_M24B_aminopep-P_CS"/>
</dbReference>
<dbReference type="InterPro" id="IPR050422">
    <property type="entry name" value="X-Pro_aminopeptidase_P"/>
</dbReference>
<dbReference type="PANTHER" id="PTHR43763">
    <property type="entry name" value="XAA-PRO AMINOPEPTIDASE 1"/>
    <property type="match status" value="1"/>
</dbReference>
<dbReference type="PANTHER" id="PTHR43763:SF4">
    <property type="entry name" value="XAA-PRO AMINOPEPTIDASE 2"/>
    <property type="match status" value="1"/>
</dbReference>
<dbReference type="Pfam" id="PF01321">
    <property type="entry name" value="Creatinase_N"/>
    <property type="match status" value="1"/>
</dbReference>
<dbReference type="Pfam" id="PF16189">
    <property type="entry name" value="Creatinase_N_2"/>
    <property type="match status" value="1"/>
</dbReference>
<dbReference type="Pfam" id="PF00557">
    <property type="entry name" value="Peptidase_M24"/>
    <property type="match status" value="1"/>
</dbReference>
<dbReference type="Pfam" id="PF16188">
    <property type="entry name" value="Peptidase_M24_C"/>
    <property type="match status" value="1"/>
</dbReference>
<dbReference type="SUPFAM" id="SSF55920">
    <property type="entry name" value="Creatinase/aminopeptidase"/>
    <property type="match status" value="1"/>
</dbReference>
<dbReference type="SUPFAM" id="SSF53092">
    <property type="entry name" value="Creatinase/prolidase N-terminal domain"/>
    <property type="match status" value="1"/>
</dbReference>
<dbReference type="PROSITE" id="PS00491">
    <property type="entry name" value="PROLINE_PEPTIDASE"/>
    <property type="match status" value="1"/>
</dbReference>
<evidence type="ECO:0000250" key="1">
    <source>
        <dbReference type="UniProtKB" id="O44750"/>
    </source>
</evidence>
<evidence type="ECO:0000250" key="2">
    <source>
        <dbReference type="UniProtKB" id="Q95333"/>
    </source>
</evidence>
<evidence type="ECO:0000250" key="3">
    <source>
        <dbReference type="UniProtKB" id="Q99MA2"/>
    </source>
</evidence>
<evidence type="ECO:0000255" key="4"/>
<evidence type="ECO:0000255" key="5">
    <source>
        <dbReference type="RuleBase" id="RU000590"/>
    </source>
</evidence>
<evidence type="ECO:0000269" key="6">
    <source>
    </source>
</evidence>
<evidence type="ECO:0000303" key="7">
    <source>
    </source>
</evidence>
<evidence type="ECO:0000305" key="8"/>
<evidence type="ECO:0000312" key="9">
    <source>
        <dbReference type="EMBL" id="AAI40978.1"/>
    </source>
</evidence>
<evidence type="ECO:0000312" key="10">
    <source>
        <dbReference type="EMBL" id="AAK52065.1"/>
    </source>
</evidence>
<evidence type="ECO:0000312" key="11">
    <source>
        <dbReference type="EMBL" id="AAL26562.1"/>
    </source>
</evidence>
<evidence type="ECO:0000312" key="12">
    <source>
        <dbReference type="EMBL" id="BAC37415.1"/>
    </source>
</evidence>
<evidence type="ECO:0000312" key="13">
    <source>
        <dbReference type="EMBL" id="BAE37828.1"/>
    </source>
</evidence>
<evidence type="ECO:0000312" key="14">
    <source>
        <dbReference type="EMBL" id="BAE42819.1"/>
    </source>
</evidence>
<evidence type="ECO:0000312" key="15">
    <source>
        <dbReference type="EMBL" id="EDL29066.1"/>
    </source>
</evidence>
<evidence type="ECO:0000312" key="16">
    <source>
        <dbReference type="MGI" id="MGI:2180001"/>
    </source>
</evidence>
<evidence type="ECO:0000312" key="17">
    <source>
        <dbReference type="Proteomes" id="UP000000589"/>
    </source>
</evidence>
<gene>
    <name evidence="16" type="primary">Xpnpep2</name>
</gene>
<reference evidence="10" key="1">
    <citation type="journal article" date="2003" name="Arch. Biochem. Biophys.">
        <title>Rat and mouse membrane aminopeptidase P: structure analysis and tissue distribution.</title>
        <authorList>
            <person name="Ersahin C."/>
            <person name="Szpaderska A.M."/>
            <person name="Simmons W.H."/>
        </authorList>
    </citation>
    <scope>NUCLEOTIDE SEQUENCE [MRNA]</scope>
    <scope>TISSUE SPECIFICITY</scope>
    <scope>DEVELOPMENTAL STAGE</scope>
    <source>
        <strain evidence="10">BALB/cJ</strain>
        <tissue evidence="10">Lung</tissue>
    </source>
</reference>
<reference evidence="11" key="2">
    <citation type="submission" date="2001-10" db="EMBL/GenBank/DDBJ databases">
        <title>Mouse membrane bound aminopeptidase P.</title>
        <authorList>
            <person name="Prueitt R.L."/>
            <person name="Zinn A.R."/>
        </authorList>
    </citation>
    <scope>NUCLEOTIDE SEQUENCE [MRNA]</scope>
</reference>
<reference evidence="12" key="3">
    <citation type="journal article" date="2005" name="Science">
        <title>The transcriptional landscape of the mammalian genome.</title>
        <authorList>
            <person name="Carninci P."/>
            <person name="Kasukawa T."/>
            <person name="Katayama S."/>
            <person name="Gough J."/>
            <person name="Frith M.C."/>
            <person name="Maeda N."/>
            <person name="Oyama R."/>
            <person name="Ravasi T."/>
            <person name="Lenhard B."/>
            <person name="Wells C."/>
            <person name="Kodzius R."/>
            <person name="Shimokawa K."/>
            <person name="Bajic V.B."/>
            <person name="Brenner S.E."/>
            <person name="Batalov S."/>
            <person name="Forrest A.R."/>
            <person name="Zavolan M."/>
            <person name="Davis M.J."/>
            <person name="Wilming L.G."/>
            <person name="Aidinis V."/>
            <person name="Allen J.E."/>
            <person name="Ambesi-Impiombato A."/>
            <person name="Apweiler R."/>
            <person name="Aturaliya R.N."/>
            <person name="Bailey T.L."/>
            <person name="Bansal M."/>
            <person name="Baxter L."/>
            <person name="Beisel K.W."/>
            <person name="Bersano T."/>
            <person name="Bono H."/>
            <person name="Chalk A.M."/>
            <person name="Chiu K.P."/>
            <person name="Choudhary V."/>
            <person name="Christoffels A."/>
            <person name="Clutterbuck D.R."/>
            <person name="Crowe M.L."/>
            <person name="Dalla E."/>
            <person name="Dalrymple B.P."/>
            <person name="de Bono B."/>
            <person name="Della Gatta G."/>
            <person name="di Bernardo D."/>
            <person name="Down T."/>
            <person name="Engstrom P."/>
            <person name="Fagiolini M."/>
            <person name="Faulkner G."/>
            <person name="Fletcher C.F."/>
            <person name="Fukushima T."/>
            <person name="Furuno M."/>
            <person name="Futaki S."/>
            <person name="Gariboldi M."/>
            <person name="Georgii-Hemming P."/>
            <person name="Gingeras T.R."/>
            <person name="Gojobori T."/>
            <person name="Green R.E."/>
            <person name="Gustincich S."/>
            <person name="Harbers M."/>
            <person name="Hayashi Y."/>
            <person name="Hensch T.K."/>
            <person name="Hirokawa N."/>
            <person name="Hill D."/>
            <person name="Huminiecki L."/>
            <person name="Iacono M."/>
            <person name="Ikeo K."/>
            <person name="Iwama A."/>
            <person name="Ishikawa T."/>
            <person name="Jakt M."/>
            <person name="Kanapin A."/>
            <person name="Katoh M."/>
            <person name="Kawasawa Y."/>
            <person name="Kelso J."/>
            <person name="Kitamura H."/>
            <person name="Kitano H."/>
            <person name="Kollias G."/>
            <person name="Krishnan S.P."/>
            <person name="Kruger A."/>
            <person name="Kummerfeld S.K."/>
            <person name="Kurochkin I.V."/>
            <person name="Lareau L.F."/>
            <person name="Lazarevic D."/>
            <person name="Lipovich L."/>
            <person name="Liu J."/>
            <person name="Liuni S."/>
            <person name="McWilliam S."/>
            <person name="Madan Babu M."/>
            <person name="Madera M."/>
            <person name="Marchionni L."/>
            <person name="Matsuda H."/>
            <person name="Matsuzawa S."/>
            <person name="Miki H."/>
            <person name="Mignone F."/>
            <person name="Miyake S."/>
            <person name="Morris K."/>
            <person name="Mottagui-Tabar S."/>
            <person name="Mulder N."/>
            <person name="Nakano N."/>
            <person name="Nakauchi H."/>
            <person name="Ng P."/>
            <person name="Nilsson R."/>
            <person name="Nishiguchi S."/>
            <person name="Nishikawa S."/>
            <person name="Nori F."/>
            <person name="Ohara O."/>
            <person name="Okazaki Y."/>
            <person name="Orlando V."/>
            <person name="Pang K.C."/>
            <person name="Pavan W.J."/>
            <person name="Pavesi G."/>
            <person name="Pesole G."/>
            <person name="Petrovsky N."/>
            <person name="Piazza S."/>
            <person name="Reed J."/>
            <person name="Reid J.F."/>
            <person name="Ring B.Z."/>
            <person name="Ringwald M."/>
            <person name="Rost B."/>
            <person name="Ruan Y."/>
            <person name="Salzberg S.L."/>
            <person name="Sandelin A."/>
            <person name="Schneider C."/>
            <person name="Schoenbach C."/>
            <person name="Sekiguchi K."/>
            <person name="Semple C.A."/>
            <person name="Seno S."/>
            <person name="Sessa L."/>
            <person name="Sheng Y."/>
            <person name="Shibata Y."/>
            <person name="Shimada H."/>
            <person name="Shimada K."/>
            <person name="Silva D."/>
            <person name="Sinclair B."/>
            <person name="Sperling S."/>
            <person name="Stupka E."/>
            <person name="Sugiura K."/>
            <person name="Sultana R."/>
            <person name="Takenaka Y."/>
            <person name="Taki K."/>
            <person name="Tammoja K."/>
            <person name="Tan S.L."/>
            <person name="Tang S."/>
            <person name="Taylor M.S."/>
            <person name="Tegner J."/>
            <person name="Teichmann S.A."/>
            <person name="Ueda H.R."/>
            <person name="van Nimwegen E."/>
            <person name="Verardo R."/>
            <person name="Wei C.L."/>
            <person name="Yagi K."/>
            <person name="Yamanishi H."/>
            <person name="Zabarovsky E."/>
            <person name="Zhu S."/>
            <person name="Zimmer A."/>
            <person name="Hide W."/>
            <person name="Bult C."/>
            <person name="Grimmond S.M."/>
            <person name="Teasdale R.D."/>
            <person name="Liu E.T."/>
            <person name="Brusic V."/>
            <person name="Quackenbush J."/>
            <person name="Wahlestedt C."/>
            <person name="Mattick J.S."/>
            <person name="Hume D.A."/>
            <person name="Kai C."/>
            <person name="Sasaki D."/>
            <person name="Tomaru Y."/>
            <person name="Fukuda S."/>
            <person name="Kanamori-Katayama M."/>
            <person name="Suzuki M."/>
            <person name="Aoki J."/>
            <person name="Arakawa T."/>
            <person name="Iida J."/>
            <person name="Imamura K."/>
            <person name="Itoh M."/>
            <person name="Kato T."/>
            <person name="Kawaji H."/>
            <person name="Kawagashira N."/>
            <person name="Kawashima T."/>
            <person name="Kojima M."/>
            <person name="Kondo S."/>
            <person name="Konno H."/>
            <person name="Nakano K."/>
            <person name="Ninomiya N."/>
            <person name="Nishio T."/>
            <person name="Okada M."/>
            <person name="Plessy C."/>
            <person name="Shibata K."/>
            <person name="Shiraki T."/>
            <person name="Suzuki S."/>
            <person name="Tagami M."/>
            <person name="Waki K."/>
            <person name="Watahiki A."/>
            <person name="Okamura-Oho Y."/>
            <person name="Suzuki H."/>
            <person name="Kawai J."/>
            <person name="Hayashizaki Y."/>
        </authorList>
    </citation>
    <scope>NUCLEOTIDE SEQUENCE [LARGE SCALE MRNA]</scope>
    <source>
        <strain evidence="13">C57BL/6J</strain>
        <strain evidence="14">NOD</strain>
        <tissue evidence="12">Colon</tissue>
        <tissue evidence="13">Heart</tissue>
        <tissue evidence="14">Spleen</tissue>
    </source>
</reference>
<reference evidence="17" key="4">
    <citation type="journal article" date="2009" name="PLoS Biol.">
        <title>Lineage-specific biology revealed by a finished genome assembly of the mouse.</title>
        <authorList>
            <person name="Church D.M."/>
            <person name="Goodstadt L."/>
            <person name="Hillier L.W."/>
            <person name="Zody M.C."/>
            <person name="Goldstein S."/>
            <person name="She X."/>
            <person name="Bult C.J."/>
            <person name="Agarwala R."/>
            <person name="Cherry J.L."/>
            <person name="DiCuccio M."/>
            <person name="Hlavina W."/>
            <person name="Kapustin Y."/>
            <person name="Meric P."/>
            <person name="Maglott D."/>
            <person name="Birtle Z."/>
            <person name="Marques A.C."/>
            <person name="Graves T."/>
            <person name="Zhou S."/>
            <person name="Teague B."/>
            <person name="Potamousis K."/>
            <person name="Churas C."/>
            <person name="Place M."/>
            <person name="Herschleb J."/>
            <person name="Runnheim R."/>
            <person name="Forrest D."/>
            <person name="Amos-Landgraf J."/>
            <person name="Schwartz D.C."/>
            <person name="Cheng Z."/>
            <person name="Lindblad-Toh K."/>
            <person name="Eichler E.E."/>
            <person name="Ponting C.P."/>
        </authorList>
    </citation>
    <scope>NUCLEOTIDE SEQUENCE [LARGE SCALE GENOMIC DNA]</scope>
    <source>
        <strain evidence="17">C57BL/6J</strain>
    </source>
</reference>
<reference evidence="15" key="5">
    <citation type="submission" date="2005-07" db="EMBL/GenBank/DDBJ databases">
        <authorList>
            <person name="Mural R.J."/>
            <person name="Adams M.D."/>
            <person name="Myers E.W."/>
            <person name="Smith H.O."/>
            <person name="Venter J.C."/>
        </authorList>
    </citation>
    <scope>NUCLEOTIDE SEQUENCE [LARGE SCALE GENOMIC DNA]</scope>
</reference>
<reference evidence="9" key="6">
    <citation type="journal article" date="2004" name="Genome Res.">
        <title>The status, quality, and expansion of the NIH full-length cDNA project: the Mammalian Gene Collection (MGC).</title>
        <authorList>
            <consortium name="The MGC Project Team"/>
        </authorList>
    </citation>
    <scope>NUCLEOTIDE SEQUENCE [LARGE SCALE MRNA]</scope>
    <source>
        <tissue evidence="9">Brain</tissue>
    </source>
</reference>
<reference key="7">
    <citation type="journal article" date="2010" name="Cell">
        <title>A tissue-specific atlas of mouse protein phosphorylation and expression.</title>
        <authorList>
            <person name="Huttlin E.L."/>
            <person name="Jedrychowski M.P."/>
            <person name="Elias J.E."/>
            <person name="Goswami T."/>
            <person name="Rad R."/>
            <person name="Beausoleil S.A."/>
            <person name="Villen J."/>
            <person name="Haas W."/>
            <person name="Sowa M.E."/>
            <person name="Gygi S.P."/>
        </authorList>
    </citation>
    <scope>IDENTIFICATION BY MASS SPECTROMETRY [LARGE SCALE ANALYSIS]</scope>
    <source>
        <tissue>Kidney</tissue>
    </source>
</reference>
<organism evidence="17">
    <name type="scientific">Mus musculus</name>
    <name type="common">Mouse</name>
    <dbReference type="NCBI Taxonomy" id="10090"/>
    <lineage>
        <taxon>Eukaryota</taxon>
        <taxon>Metazoa</taxon>
        <taxon>Chordata</taxon>
        <taxon>Craniata</taxon>
        <taxon>Vertebrata</taxon>
        <taxon>Euteleostomi</taxon>
        <taxon>Mammalia</taxon>
        <taxon>Eutheria</taxon>
        <taxon>Euarchontoglires</taxon>
        <taxon>Glires</taxon>
        <taxon>Rodentia</taxon>
        <taxon>Myomorpha</taxon>
        <taxon>Muroidea</taxon>
        <taxon>Muridae</taxon>
        <taxon>Murinae</taxon>
        <taxon>Mus</taxon>
        <taxon>Mus</taxon>
    </lineage>
</organism>
<name>XPP2_MOUSE</name>
<comment type="function">
    <text evidence="2">Membrane-bound metalloprotease which catalyzes the removal of a penultimate prolyl residue from the N-termini of peptides, such as Arg-Pro-Pro. May play a role in the metabolism of the vasodilator bradykinin.</text>
</comment>
<comment type="catalytic activity">
    <reaction evidence="2">
        <text>Release of any N-terminal amino acid, including proline, that is linked to proline, even from a dipeptide or tripeptide.</text>
        <dbReference type="EC" id="3.4.11.9"/>
    </reaction>
</comment>
<comment type="cofactor">
    <cofactor evidence="2">
        <name>Zn(2+)</name>
        <dbReference type="ChEBI" id="CHEBI:29105"/>
    </cofactor>
</comment>
<comment type="subunit">
    <text evidence="2">Homotrimer.</text>
</comment>
<comment type="subcellular location">
    <subcellularLocation>
        <location evidence="2">Cell membrane</location>
        <topology evidence="2">Lipid-anchor</topology>
        <topology evidence="2">GPI-anchor</topology>
    </subcellularLocation>
</comment>
<comment type="tissue specificity">
    <text evidence="6">Strongly expressed in small intestine, heart and lung. Also detected in testis, skeletal muscle, spleen, liver, kidney, brain, uterus, eye, lymph node, thymus, stomach, prostate and bone marrow.</text>
</comment>
<comment type="developmental stage">
    <text evidence="6">Expressed in embryos from 7 days onwards, with highest expression at 15 days.</text>
</comment>
<comment type="PTM">
    <text evidence="3">N-glycosylated.</text>
</comment>
<comment type="similarity">
    <text evidence="5 8">Belongs to the peptidase M24B family.</text>
</comment>
<comment type="sequence caution" evidence="8">
    <conflict type="frameshift">
        <sequence resource="EMBL-CDS" id="BAC37415"/>
    </conflict>
</comment>
<comment type="sequence caution" evidence="8">
    <conflict type="frameshift">
        <sequence resource="EMBL-CDS" id="BAE37828"/>
    </conflict>
</comment>
<comment type="sequence caution" evidence="8">
    <conflict type="frameshift">
        <sequence resource="EMBL-CDS" id="BAE42819"/>
    </conflict>
</comment>
<protein>
    <recommendedName>
        <fullName evidence="8">Xaa-Pro aminopeptidase 2</fullName>
        <ecNumber evidence="2">3.4.11.9</ecNumber>
    </recommendedName>
    <alternativeName>
        <fullName evidence="7">Membrane-bound aminopeptidase P</fullName>
        <shortName evidence="7">Membrane-bound APP</shortName>
        <shortName evidence="7">mAPP</shortName>
    </alternativeName>
    <alternativeName>
        <fullName evidence="16">X-prolyl aminopeptidase 2</fullName>
    </alternativeName>
</protein>